<accession>Q9KLL6</accession>
<organism>
    <name type="scientific">Vibrio cholerae serotype O1 (strain ATCC 39315 / El Tor Inaba N16961)</name>
    <dbReference type="NCBI Taxonomy" id="243277"/>
    <lineage>
        <taxon>Bacteria</taxon>
        <taxon>Pseudomonadati</taxon>
        <taxon>Pseudomonadota</taxon>
        <taxon>Gammaproteobacteria</taxon>
        <taxon>Vibrionales</taxon>
        <taxon>Vibrionaceae</taxon>
        <taxon>Vibrio</taxon>
    </lineage>
</organism>
<evidence type="ECO:0000255" key="1">
    <source>
        <dbReference type="HAMAP-Rule" id="MF_00028"/>
    </source>
</evidence>
<reference key="1">
    <citation type="journal article" date="2000" name="Nature">
        <title>DNA sequence of both chromosomes of the cholera pathogen Vibrio cholerae.</title>
        <authorList>
            <person name="Heidelberg J.F."/>
            <person name="Eisen J.A."/>
            <person name="Nelson W.C."/>
            <person name="Clayton R.A."/>
            <person name="Gwinn M.L."/>
            <person name="Dodson R.J."/>
            <person name="Haft D.H."/>
            <person name="Hickey E.K."/>
            <person name="Peterson J.D."/>
            <person name="Umayam L.A."/>
            <person name="Gill S.R."/>
            <person name="Nelson K.E."/>
            <person name="Read T.D."/>
            <person name="Tettelin H."/>
            <person name="Richardson D.L."/>
            <person name="Ermolaeva M.D."/>
            <person name="Vamathevan J.J."/>
            <person name="Bass S."/>
            <person name="Qin H."/>
            <person name="Dragoi I."/>
            <person name="Sellers P."/>
            <person name="McDonald L.A."/>
            <person name="Utterback T.R."/>
            <person name="Fleischmann R.D."/>
            <person name="Nierman W.C."/>
            <person name="White O."/>
            <person name="Salzberg S.L."/>
            <person name="Smith H.O."/>
            <person name="Colwell R.R."/>
            <person name="Mekalanos J.J."/>
            <person name="Venter J.C."/>
            <person name="Fraser C.M."/>
        </authorList>
    </citation>
    <scope>NUCLEOTIDE SEQUENCE [LARGE SCALE GENOMIC DNA]</scope>
    <source>
        <strain>ATCC 39315 / El Tor Inaba N16961</strain>
    </source>
</reference>
<proteinExistence type="inferred from homology"/>
<feature type="chain" id="PRO_0000141338" description="Cobyric acid synthase">
    <location>
        <begin position="1"/>
        <end position="484"/>
    </location>
</feature>
<feature type="domain" description="GATase cobBQ-type" evidence="1">
    <location>
        <begin position="249"/>
        <end position="438"/>
    </location>
</feature>
<feature type="active site" description="Nucleophile" evidence="1">
    <location>
        <position position="330"/>
    </location>
</feature>
<feature type="active site" evidence="1">
    <location>
        <position position="430"/>
    </location>
</feature>
<protein>
    <recommendedName>
        <fullName evidence="1">Cobyric acid synthase</fullName>
    </recommendedName>
</protein>
<comment type="function">
    <text evidence="1">Catalyzes amidations at positions B, D, E, and G on adenosylcobyrinic A,C-diamide. NH(2) groups are provided by glutamine, and one molecule of ATP is hydrogenolyzed for each amidation.</text>
</comment>
<comment type="pathway">
    <text evidence="1">Cofactor biosynthesis; adenosylcobalamin biosynthesis.</text>
</comment>
<comment type="similarity">
    <text evidence="1">Belongs to the CobB/CobQ family. CobQ subfamily.</text>
</comment>
<gene>
    <name evidence="1" type="primary">cobQ</name>
    <name type="ordered locus">VC_A0727</name>
</gene>
<name>COBQ_VIBCH</name>
<sequence>MKKWLMVQGTTSDAGKSVLVAGLCRVLARRGIQVCPFKPQNMALNSAVTPDGGEIGRAQAVQAQACGIAPSVHMNPVLLKPNSDTGAQVILQGRALSNMEANAYHDYKKVAMDTVMDSFQRLQQEYEAIMIEGAGSPAEINLRENDIANMGFAEKADVPVIIVADIDRGGVFAHLYGTLALLSESEQARVKGFVINRFRGDIGLLQSGLDWLEQKTGKPVIGVLPYLHGFDLEAEDAIAAQQNLSADRQLRVAVPVFTRISNHTDFDPLRLNPNIDFRYVGQGESLSGADLIILPGSKSTRADLAYLRSQGWDKEILRHLRLGGKVMGICGGFQMLGEWVHDPLGIEGEAGSSEGLGLFAMQTELTAEKRLTNVKGHLTLDGQTVAAQGYEIHAGHSSWAADQKSPIILSDGSLDGLVSDCNQGFGTYLHGIFDRPETALRICQWAGAKEIEAYDHRAAQERAIDRIADAIEQHLDLTLLWPDL</sequence>
<dbReference type="EMBL" id="AE003853">
    <property type="protein sequence ID" value="AAF96626.1"/>
    <property type="molecule type" value="Genomic_DNA"/>
</dbReference>
<dbReference type="PIR" id="C82426">
    <property type="entry name" value="C82426"/>
</dbReference>
<dbReference type="RefSeq" id="NP_233114.1">
    <property type="nucleotide sequence ID" value="NC_002506.1"/>
</dbReference>
<dbReference type="RefSeq" id="WP_000759052.1">
    <property type="nucleotide sequence ID" value="NZ_LT906615.1"/>
</dbReference>
<dbReference type="SMR" id="Q9KLL6"/>
<dbReference type="STRING" id="243277.VC_A0727"/>
<dbReference type="DNASU" id="2611960"/>
<dbReference type="EnsemblBacteria" id="AAF96626">
    <property type="protein sequence ID" value="AAF96626"/>
    <property type="gene ID" value="VC_A0727"/>
</dbReference>
<dbReference type="KEGG" id="vch:VC_A0727"/>
<dbReference type="PATRIC" id="fig|243277.26.peg.3350"/>
<dbReference type="eggNOG" id="COG1492">
    <property type="taxonomic scope" value="Bacteria"/>
</dbReference>
<dbReference type="HOGENOM" id="CLU_019250_2_0_6"/>
<dbReference type="UniPathway" id="UPA00148"/>
<dbReference type="Proteomes" id="UP000000584">
    <property type="component" value="Chromosome 2"/>
</dbReference>
<dbReference type="GO" id="GO:0015420">
    <property type="term" value="F:ABC-type vitamin B12 transporter activity"/>
    <property type="evidence" value="ECO:0007669"/>
    <property type="project" value="UniProtKB-UniRule"/>
</dbReference>
<dbReference type="GO" id="GO:0003824">
    <property type="term" value="F:catalytic activity"/>
    <property type="evidence" value="ECO:0007669"/>
    <property type="project" value="InterPro"/>
</dbReference>
<dbReference type="GO" id="GO:0009236">
    <property type="term" value="P:cobalamin biosynthetic process"/>
    <property type="evidence" value="ECO:0007669"/>
    <property type="project" value="UniProtKB-UniRule"/>
</dbReference>
<dbReference type="CDD" id="cd05389">
    <property type="entry name" value="CobQ_N"/>
    <property type="match status" value="1"/>
</dbReference>
<dbReference type="CDD" id="cd01750">
    <property type="entry name" value="GATase1_CobQ"/>
    <property type="match status" value="1"/>
</dbReference>
<dbReference type="FunFam" id="3.40.50.300:FF:002880">
    <property type="entry name" value="Cobyric acid synthase"/>
    <property type="match status" value="1"/>
</dbReference>
<dbReference type="FunFam" id="3.40.50.880:FF:000136">
    <property type="entry name" value="Cobyric acid synthase"/>
    <property type="match status" value="1"/>
</dbReference>
<dbReference type="Gene3D" id="3.40.50.880">
    <property type="match status" value="1"/>
</dbReference>
<dbReference type="Gene3D" id="3.40.50.300">
    <property type="entry name" value="P-loop containing nucleotide triphosphate hydrolases"/>
    <property type="match status" value="1"/>
</dbReference>
<dbReference type="HAMAP" id="MF_00028">
    <property type="entry name" value="CobQ"/>
    <property type="match status" value="1"/>
</dbReference>
<dbReference type="InterPro" id="IPR029062">
    <property type="entry name" value="Class_I_gatase-like"/>
</dbReference>
<dbReference type="InterPro" id="IPR002586">
    <property type="entry name" value="CobQ/CobB/MinD/ParA_Nub-bd_dom"/>
</dbReference>
<dbReference type="InterPro" id="IPR033949">
    <property type="entry name" value="CobQ_GATase1"/>
</dbReference>
<dbReference type="InterPro" id="IPR047045">
    <property type="entry name" value="CobQ_N"/>
</dbReference>
<dbReference type="InterPro" id="IPR004459">
    <property type="entry name" value="CobQ_synth"/>
</dbReference>
<dbReference type="InterPro" id="IPR011698">
    <property type="entry name" value="GATase_3"/>
</dbReference>
<dbReference type="InterPro" id="IPR027417">
    <property type="entry name" value="P-loop_NTPase"/>
</dbReference>
<dbReference type="NCBIfam" id="TIGR00313">
    <property type="entry name" value="cobQ"/>
    <property type="match status" value="1"/>
</dbReference>
<dbReference type="NCBIfam" id="NF001989">
    <property type="entry name" value="PRK00784.1"/>
    <property type="match status" value="1"/>
</dbReference>
<dbReference type="PANTHER" id="PTHR21343:SF1">
    <property type="entry name" value="COBYRIC ACID SYNTHASE"/>
    <property type="match status" value="1"/>
</dbReference>
<dbReference type="PANTHER" id="PTHR21343">
    <property type="entry name" value="DETHIOBIOTIN SYNTHETASE"/>
    <property type="match status" value="1"/>
</dbReference>
<dbReference type="Pfam" id="PF01656">
    <property type="entry name" value="CbiA"/>
    <property type="match status" value="1"/>
</dbReference>
<dbReference type="Pfam" id="PF07685">
    <property type="entry name" value="GATase_3"/>
    <property type="match status" value="1"/>
</dbReference>
<dbReference type="SUPFAM" id="SSF52317">
    <property type="entry name" value="Class I glutamine amidotransferase-like"/>
    <property type="match status" value="1"/>
</dbReference>
<dbReference type="SUPFAM" id="SSF52540">
    <property type="entry name" value="P-loop containing nucleoside triphosphate hydrolases"/>
    <property type="match status" value="1"/>
</dbReference>
<dbReference type="PROSITE" id="PS51274">
    <property type="entry name" value="GATASE_COBBQ"/>
    <property type="match status" value="1"/>
</dbReference>
<keyword id="KW-0169">Cobalamin biosynthesis</keyword>
<keyword id="KW-0315">Glutamine amidotransferase</keyword>
<keyword id="KW-1185">Reference proteome</keyword>